<name>HSLV_XANCP</name>
<feature type="chain" id="PRO_0000148165" description="ATP-dependent protease subunit HslV">
    <location>
        <begin position="1"/>
        <end position="183"/>
    </location>
</feature>
<feature type="active site" evidence="1">
    <location>
        <position position="13"/>
    </location>
</feature>
<feature type="binding site" evidence="1">
    <location>
        <position position="168"/>
    </location>
    <ligand>
        <name>Na(+)</name>
        <dbReference type="ChEBI" id="CHEBI:29101"/>
    </ligand>
</feature>
<feature type="binding site" evidence="1">
    <location>
        <position position="171"/>
    </location>
    <ligand>
        <name>Na(+)</name>
        <dbReference type="ChEBI" id="CHEBI:29101"/>
    </ligand>
</feature>
<feature type="binding site" evidence="1">
    <location>
        <position position="174"/>
    </location>
    <ligand>
        <name>Na(+)</name>
        <dbReference type="ChEBI" id="CHEBI:29101"/>
    </ligand>
</feature>
<proteinExistence type="inferred from homology"/>
<reference key="1">
    <citation type="journal article" date="2002" name="Nature">
        <title>Comparison of the genomes of two Xanthomonas pathogens with differing host specificities.</title>
        <authorList>
            <person name="da Silva A.C.R."/>
            <person name="Ferro J.A."/>
            <person name="Reinach F.C."/>
            <person name="Farah C.S."/>
            <person name="Furlan L.R."/>
            <person name="Quaggio R.B."/>
            <person name="Monteiro-Vitorello C.B."/>
            <person name="Van Sluys M.A."/>
            <person name="Almeida N.F. Jr."/>
            <person name="Alves L.M.C."/>
            <person name="do Amaral A.M."/>
            <person name="Bertolini M.C."/>
            <person name="Camargo L.E.A."/>
            <person name="Camarotte G."/>
            <person name="Cannavan F."/>
            <person name="Cardozo J."/>
            <person name="Chambergo F."/>
            <person name="Ciapina L.P."/>
            <person name="Cicarelli R.M.B."/>
            <person name="Coutinho L.L."/>
            <person name="Cursino-Santos J.R."/>
            <person name="El-Dorry H."/>
            <person name="Faria J.B."/>
            <person name="Ferreira A.J.S."/>
            <person name="Ferreira R.C.C."/>
            <person name="Ferro M.I.T."/>
            <person name="Formighieri E.F."/>
            <person name="Franco M.C."/>
            <person name="Greggio C.C."/>
            <person name="Gruber A."/>
            <person name="Katsuyama A.M."/>
            <person name="Kishi L.T."/>
            <person name="Leite R.P."/>
            <person name="Lemos E.G.M."/>
            <person name="Lemos M.V.F."/>
            <person name="Locali E.C."/>
            <person name="Machado M.A."/>
            <person name="Madeira A.M.B.N."/>
            <person name="Martinez-Rossi N.M."/>
            <person name="Martins E.C."/>
            <person name="Meidanis J."/>
            <person name="Menck C.F.M."/>
            <person name="Miyaki C.Y."/>
            <person name="Moon D.H."/>
            <person name="Moreira L.M."/>
            <person name="Novo M.T.M."/>
            <person name="Okura V.K."/>
            <person name="Oliveira M.C."/>
            <person name="Oliveira V.R."/>
            <person name="Pereira H.A."/>
            <person name="Rossi A."/>
            <person name="Sena J.A.D."/>
            <person name="Silva C."/>
            <person name="de Souza R.F."/>
            <person name="Spinola L.A.F."/>
            <person name="Takita M.A."/>
            <person name="Tamura R.E."/>
            <person name="Teixeira E.C."/>
            <person name="Tezza R.I.D."/>
            <person name="Trindade dos Santos M."/>
            <person name="Truffi D."/>
            <person name="Tsai S.M."/>
            <person name="White F.F."/>
            <person name="Setubal J.C."/>
            <person name="Kitajima J.P."/>
        </authorList>
    </citation>
    <scope>NUCLEOTIDE SEQUENCE [LARGE SCALE GENOMIC DNA]</scope>
    <source>
        <strain>ATCC 33913 / DSM 3586 / NCPPB 528 / LMG 568 / P 25</strain>
    </source>
</reference>
<comment type="function">
    <text evidence="1">Protease subunit of a proteasome-like degradation complex believed to be a general protein degrading machinery.</text>
</comment>
<comment type="catalytic activity">
    <reaction evidence="1">
        <text>ATP-dependent cleavage of peptide bonds with broad specificity.</text>
        <dbReference type="EC" id="3.4.25.2"/>
    </reaction>
</comment>
<comment type="activity regulation">
    <text evidence="1">Allosterically activated by HslU binding.</text>
</comment>
<comment type="subunit">
    <text evidence="1">A double ring-shaped homohexamer of HslV is capped on each side by a ring-shaped HslU homohexamer. The assembly of the HslU/HslV complex is dependent on binding of ATP.</text>
</comment>
<comment type="subcellular location">
    <subcellularLocation>
        <location evidence="1">Cytoplasm</location>
    </subcellularLocation>
</comment>
<comment type="similarity">
    <text evidence="1">Belongs to the peptidase T1B family. HslV subfamily.</text>
</comment>
<evidence type="ECO:0000255" key="1">
    <source>
        <dbReference type="HAMAP-Rule" id="MF_00248"/>
    </source>
</evidence>
<dbReference type="EC" id="3.4.25.2" evidence="1"/>
<dbReference type="EMBL" id="AE008922">
    <property type="protein sequence ID" value="AAM42764.1"/>
    <property type="molecule type" value="Genomic_DNA"/>
</dbReference>
<dbReference type="RefSeq" id="NP_638840.1">
    <property type="nucleotide sequence ID" value="NC_003902.1"/>
</dbReference>
<dbReference type="RefSeq" id="WP_011038588.1">
    <property type="nucleotide sequence ID" value="NC_003902.1"/>
</dbReference>
<dbReference type="SMR" id="Q8P551"/>
<dbReference type="STRING" id="190485.XCC3494"/>
<dbReference type="MEROPS" id="T01.006"/>
<dbReference type="EnsemblBacteria" id="AAM42764">
    <property type="protein sequence ID" value="AAM42764"/>
    <property type="gene ID" value="XCC3494"/>
</dbReference>
<dbReference type="GeneID" id="58011974"/>
<dbReference type="KEGG" id="xcc:XCC3494"/>
<dbReference type="PATRIC" id="fig|190485.4.peg.3737"/>
<dbReference type="eggNOG" id="COG5405">
    <property type="taxonomic scope" value="Bacteria"/>
</dbReference>
<dbReference type="HOGENOM" id="CLU_093872_1_0_6"/>
<dbReference type="OrthoDB" id="9804884at2"/>
<dbReference type="Proteomes" id="UP000001010">
    <property type="component" value="Chromosome"/>
</dbReference>
<dbReference type="GO" id="GO:0005737">
    <property type="term" value="C:cytoplasm"/>
    <property type="evidence" value="ECO:0000318"/>
    <property type="project" value="GO_Central"/>
</dbReference>
<dbReference type="GO" id="GO:0009376">
    <property type="term" value="C:HslUV protease complex"/>
    <property type="evidence" value="ECO:0007669"/>
    <property type="project" value="UniProtKB-UniRule"/>
</dbReference>
<dbReference type="GO" id="GO:0005839">
    <property type="term" value="C:proteasome core complex"/>
    <property type="evidence" value="ECO:0007669"/>
    <property type="project" value="InterPro"/>
</dbReference>
<dbReference type="GO" id="GO:0046872">
    <property type="term" value="F:metal ion binding"/>
    <property type="evidence" value="ECO:0007669"/>
    <property type="project" value="UniProtKB-KW"/>
</dbReference>
<dbReference type="GO" id="GO:0004298">
    <property type="term" value="F:threonine-type endopeptidase activity"/>
    <property type="evidence" value="ECO:0007669"/>
    <property type="project" value="UniProtKB-KW"/>
</dbReference>
<dbReference type="GO" id="GO:0051603">
    <property type="term" value="P:proteolysis involved in protein catabolic process"/>
    <property type="evidence" value="ECO:0000318"/>
    <property type="project" value="GO_Central"/>
</dbReference>
<dbReference type="FunFam" id="3.60.20.10:FF:000002">
    <property type="entry name" value="ATP-dependent protease subunit HslV"/>
    <property type="match status" value="1"/>
</dbReference>
<dbReference type="Gene3D" id="3.60.20.10">
    <property type="entry name" value="Glutamine Phosphoribosylpyrophosphate, subunit 1, domain 1"/>
    <property type="match status" value="1"/>
</dbReference>
<dbReference type="HAMAP" id="MF_00248">
    <property type="entry name" value="HslV"/>
    <property type="match status" value="1"/>
</dbReference>
<dbReference type="InterPro" id="IPR022281">
    <property type="entry name" value="ATP-dep_Prtase_HsIV_su"/>
</dbReference>
<dbReference type="InterPro" id="IPR029055">
    <property type="entry name" value="Ntn_hydrolases_N"/>
</dbReference>
<dbReference type="InterPro" id="IPR001353">
    <property type="entry name" value="Proteasome_sua/b"/>
</dbReference>
<dbReference type="InterPro" id="IPR023333">
    <property type="entry name" value="Proteasome_suB-type"/>
</dbReference>
<dbReference type="NCBIfam" id="TIGR03692">
    <property type="entry name" value="ATP_dep_HslV"/>
    <property type="match status" value="1"/>
</dbReference>
<dbReference type="NCBIfam" id="NF003964">
    <property type="entry name" value="PRK05456.1"/>
    <property type="match status" value="1"/>
</dbReference>
<dbReference type="PANTHER" id="PTHR32194:SF0">
    <property type="entry name" value="ATP-DEPENDENT PROTEASE SUBUNIT HSLV"/>
    <property type="match status" value="1"/>
</dbReference>
<dbReference type="PANTHER" id="PTHR32194">
    <property type="entry name" value="METALLOPROTEASE TLDD"/>
    <property type="match status" value="1"/>
</dbReference>
<dbReference type="Pfam" id="PF00227">
    <property type="entry name" value="Proteasome"/>
    <property type="match status" value="1"/>
</dbReference>
<dbReference type="PIRSF" id="PIRSF039093">
    <property type="entry name" value="HslV"/>
    <property type="match status" value="1"/>
</dbReference>
<dbReference type="SUPFAM" id="SSF56235">
    <property type="entry name" value="N-terminal nucleophile aminohydrolases (Ntn hydrolases)"/>
    <property type="match status" value="1"/>
</dbReference>
<dbReference type="PROSITE" id="PS51476">
    <property type="entry name" value="PROTEASOME_BETA_2"/>
    <property type="match status" value="1"/>
</dbReference>
<accession>Q8P551</accession>
<sequence length="183" mass="19296">MDPSQNPNVVHATTIISVRRGGHVAVAGDGQVTLGHTVMKGNARKVRRLGRDGQVLAGFAGAAADAFTLFELFEAKLDKHGQLTRAAVELAKDWRTERRLGKLEALLAVADKETSLIISGTGDVIEPEDGIIAIGSGGSYALSAARALLAHTELDAKTIATEAINIAGDICIYTNRNVVVEEL</sequence>
<keyword id="KW-0021">Allosteric enzyme</keyword>
<keyword id="KW-0963">Cytoplasm</keyword>
<keyword id="KW-0378">Hydrolase</keyword>
<keyword id="KW-0479">Metal-binding</keyword>
<keyword id="KW-0645">Protease</keyword>
<keyword id="KW-1185">Reference proteome</keyword>
<keyword id="KW-0915">Sodium</keyword>
<keyword id="KW-0888">Threonine protease</keyword>
<protein>
    <recommendedName>
        <fullName evidence="1">ATP-dependent protease subunit HslV</fullName>
        <ecNumber evidence="1">3.4.25.2</ecNumber>
    </recommendedName>
</protein>
<organism>
    <name type="scientific">Xanthomonas campestris pv. campestris (strain ATCC 33913 / DSM 3586 / NCPPB 528 / LMG 568 / P 25)</name>
    <dbReference type="NCBI Taxonomy" id="190485"/>
    <lineage>
        <taxon>Bacteria</taxon>
        <taxon>Pseudomonadati</taxon>
        <taxon>Pseudomonadota</taxon>
        <taxon>Gammaproteobacteria</taxon>
        <taxon>Lysobacterales</taxon>
        <taxon>Lysobacteraceae</taxon>
        <taxon>Xanthomonas</taxon>
    </lineage>
</organism>
<gene>
    <name evidence="1" type="primary">hslV</name>
    <name type="ordered locus">XCC3494</name>
</gene>